<accession>A4QH44</accession>
<dbReference type="EC" id="3.5.99.6" evidence="1"/>
<dbReference type="EMBL" id="AP009044">
    <property type="protein sequence ID" value="BAF55560.1"/>
    <property type="molecule type" value="Genomic_DNA"/>
</dbReference>
<dbReference type="RefSeq" id="WP_011897878.1">
    <property type="nucleotide sequence ID" value="NC_009342.1"/>
</dbReference>
<dbReference type="SMR" id="A4QH44"/>
<dbReference type="KEGG" id="cgt:cgR_2549"/>
<dbReference type="HOGENOM" id="CLU_049611_1_1_11"/>
<dbReference type="PhylomeDB" id="A4QH44"/>
<dbReference type="UniPathway" id="UPA00629">
    <property type="reaction ID" value="UER00684"/>
</dbReference>
<dbReference type="Proteomes" id="UP000006698">
    <property type="component" value="Chromosome"/>
</dbReference>
<dbReference type="GO" id="GO:0005737">
    <property type="term" value="C:cytoplasm"/>
    <property type="evidence" value="ECO:0007669"/>
    <property type="project" value="TreeGrafter"/>
</dbReference>
<dbReference type="GO" id="GO:0004342">
    <property type="term" value="F:glucosamine-6-phosphate deaminase activity"/>
    <property type="evidence" value="ECO:0007669"/>
    <property type="project" value="UniProtKB-UniRule"/>
</dbReference>
<dbReference type="GO" id="GO:0042802">
    <property type="term" value="F:identical protein binding"/>
    <property type="evidence" value="ECO:0007669"/>
    <property type="project" value="TreeGrafter"/>
</dbReference>
<dbReference type="GO" id="GO:0005975">
    <property type="term" value="P:carbohydrate metabolic process"/>
    <property type="evidence" value="ECO:0007669"/>
    <property type="project" value="InterPro"/>
</dbReference>
<dbReference type="GO" id="GO:0006043">
    <property type="term" value="P:glucosamine catabolic process"/>
    <property type="evidence" value="ECO:0007669"/>
    <property type="project" value="TreeGrafter"/>
</dbReference>
<dbReference type="GO" id="GO:0006046">
    <property type="term" value="P:N-acetylglucosamine catabolic process"/>
    <property type="evidence" value="ECO:0007669"/>
    <property type="project" value="TreeGrafter"/>
</dbReference>
<dbReference type="GO" id="GO:0019262">
    <property type="term" value="P:N-acetylneuraminate catabolic process"/>
    <property type="evidence" value="ECO:0007669"/>
    <property type="project" value="UniProtKB-UniRule"/>
</dbReference>
<dbReference type="CDD" id="cd01399">
    <property type="entry name" value="GlcN6P_deaminase"/>
    <property type="match status" value="1"/>
</dbReference>
<dbReference type="Gene3D" id="3.40.50.1360">
    <property type="match status" value="1"/>
</dbReference>
<dbReference type="HAMAP" id="MF_01241">
    <property type="entry name" value="GlcN6P_deamin"/>
    <property type="match status" value="1"/>
</dbReference>
<dbReference type="InterPro" id="IPR006148">
    <property type="entry name" value="Glc/Gal-6P_isomerase"/>
</dbReference>
<dbReference type="InterPro" id="IPR004547">
    <property type="entry name" value="Glucosamine6P_isomerase"/>
</dbReference>
<dbReference type="InterPro" id="IPR037171">
    <property type="entry name" value="NagB/RpiA_transferase-like"/>
</dbReference>
<dbReference type="NCBIfam" id="TIGR00502">
    <property type="entry name" value="nagB"/>
    <property type="match status" value="1"/>
</dbReference>
<dbReference type="PANTHER" id="PTHR11280">
    <property type="entry name" value="GLUCOSAMINE-6-PHOSPHATE ISOMERASE"/>
    <property type="match status" value="1"/>
</dbReference>
<dbReference type="PANTHER" id="PTHR11280:SF5">
    <property type="entry name" value="GLUCOSAMINE-6-PHOSPHATE ISOMERASE"/>
    <property type="match status" value="1"/>
</dbReference>
<dbReference type="Pfam" id="PF01182">
    <property type="entry name" value="Glucosamine_iso"/>
    <property type="match status" value="1"/>
</dbReference>
<dbReference type="SUPFAM" id="SSF100950">
    <property type="entry name" value="NagB/RpiA/CoA transferase-like"/>
    <property type="match status" value="1"/>
</dbReference>
<evidence type="ECO:0000255" key="1">
    <source>
        <dbReference type="HAMAP-Rule" id="MF_01241"/>
    </source>
</evidence>
<name>NAGB_CORGB</name>
<comment type="function">
    <text evidence="1">Catalyzes the reversible isomerization-deamination of glucosamine 6-phosphate (GlcN6P) to form fructose 6-phosphate (Fru6P) and ammonium ion.</text>
</comment>
<comment type="catalytic activity">
    <reaction evidence="1">
        <text>alpha-D-glucosamine 6-phosphate + H2O = beta-D-fructose 6-phosphate + NH4(+)</text>
        <dbReference type="Rhea" id="RHEA:12172"/>
        <dbReference type="ChEBI" id="CHEBI:15377"/>
        <dbReference type="ChEBI" id="CHEBI:28938"/>
        <dbReference type="ChEBI" id="CHEBI:57634"/>
        <dbReference type="ChEBI" id="CHEBI:75989"/>
        <dbReference type="EC" id="3.5.99.6"/>
    </reaction>
</comment>
<comment type="pathway">
    <text evidence="1">Amino-sugar metabolism; N-acetylneuraminate degradation; D-fructose 6-phosphate from N-acetylneuraminate: step 5/5.</text>
</comment>
<comment type="similarity">
    <text evidence="1">Belongs to the glucosamine/galactosamine-6-phosphate isomerase family. NagB subfamily.</text>
</comment>
<organism>
    <name type="scientific">Corynebacterium glutamicum (strain R)</name>
    <dbReference type="NCBI Taxonomy" id="340322"/>
    <lineage>
        <taxon>Bacteria</taxon>
        <taxon>Bacillati</taxon>
        <taxon>Actinomycetota</taxon>
        <taxon>Actinomycetes</taxon>
        <taxon>Mycobacteriales</taxon>
        <taxon>Corynebacteriaceae</taxon>
        <taxon>Corynebacterium</taxon>
    </lineage>
</organism>
<feature type="chain" id="PRO_1000066976" description="Glucosamine-6-phosphate deaminase">
    <location>
        <begin position="1"/>
        <end position="253"/>
    </location>
</feature>
<feature type="active site" description="Proton acceptor; for enolization step" evidence="1">
    <location>
        <position position="65"/>
    </location>
</feature>
<feature type="active site" description="For ring-opening step" evidence="1">
    <location>
        <position position="133"/>
    </location>
</feature>
<feature type="active site" description="Proton acceptor; for ring-opening step" evidence="1">
    <location>
        <position position="135"/>
    </location>
</feature>
<feature type="active site" description="For ring-opening step" evidence="1">
    <location>
        <position position="140"/>
    </location>
</feature>
<protein>
    <recommendedName>
        <fullName evidence="1">Glucosamine-6-phosphate deaminase</fullName>
        <ecNumber evidence="1">3.5.99.6</ecNumber>
    </recommendedName>
    <alternativeName>
        <fullName evidence="1">GlcN6P deaminase</fullName>
        <shortName evidence="1">GNPDA</shortName>
    </alternativeName>
    <alternativeName>
        <fullName evidence="1">Glucosamine-6-phosphate isomerase</fullName>
    </alternativeName>
</protein>
<sequence>MDIIICKDEQEVGKAAAALIAPFATKGGTLGLATGSSPLSTYQELIRMYEAGEVSFKNCKAFLLDEYVGLTRDDENSYFKTIRKEFTDHIDIVDEEVYSPDGANPDPYEAAAEYEAKIAAESVDVQILGIGGNGHIAFNEPSSSLSGLTKVQALHPKTVEDNARFFNTIEEVPTHALTQGLGTLSRAQNIVLVATGEGKADAIRGTVEGPVTASCPGSILQMHNNATIIVDEAAASKLENADHYRLMEQLKLR</sequence>
<keyword id="KW-0119">Carbohydrate metabolism</keyword>
<keyword id="KW-0378">Hydrolase</keyword>
<proteinExistence type="inferred from homology"/>
<gene>
    <name evidence="1" type="primary">nagB</name>
    <name type="ordered locus">cgR_2549</name>
</gene>
<reference key="1">
    <citation type="journal article" date="2007" name="Microbiology">
        <title>Comparative analysis of the Corynebacterium glutamicum group and complete genome sequence of strain R.</title>
        <authorList>
            <person name="Yukawa H."/>
            <person name="Omumasaba C.A."/>
            <person name="Nonaka H."/>
            <person name="Kos P."/>
            <person name="Okai N."/>
            <person name="Suzuki N."/>
            <person name="Suda M."/>
            <person name="Tsuge Y."/>
            <person name="Watanabe J."/>
            <person name="Ikeda Y."/>
            <person name="Vertes A.A."/>
            <person name="Inui M."/>
        </authorList>
    </citation>
    <scope>NUCLEOTIDE SEQUENCE [LARGE SCALE GENOMIC DNA]</scope>
    <source>
        <strain>R</strain>
    </source>
</reference>